<comment type="function">
    <text evidence="1">Involved in maceration and soft-rotting of plant tissue. Hydrolyzes the 1,4-alpha glycosidic bonds of de-esterified pectate in the smooth region of the plant cell wall (By similarity).</text>
</comment>
<comment type="catalytic activity">
    <reaction>
        <text>(1,4-alpha-D-galacturonosyl)n+m + H2O = (1,4-alpha-D-galacturonosyl)n + (1,4-alpha-D-galacturonosyl)m.</text>
        <dbReference type="EC" id="3.2.1.15"/>
    </reaction>
</comment>
<comment type="subcellular location">
    <subcellularLocation>
        <location evidence="1">Secreted</location>
    </subcellularLocation>
</comment>
<comment type="similarity">
    <text evidence="3">Belongs to the glycosyl hydrolase 28 family.</text>
</comment>
<organism>
    <name type="scientific">Aspergillus niger (strain ATCC MYA-4892 / CBS 513.88 / FGSC A1513)</name>
    <dbReference type="NCBI Taxonomy" id="425011"/>
    <lineage>
        <taxon>Eukaryota</taxon>
        <taxon>Fungi</taxon>
        <taxon>Dikarya</taxon>
        <taxon>Ascomycota</taxon>
        <taxon>Pezizomycotina</taxon>
        <taxon>Eurotiomycetes</taxon>
        <taxon>Eurotiomycetidae</taxon>
        <taxon>Eurotiales</taxon>
        <taxon>Aspergillaceae</taxon>
        <taxon>Aspergillus</taxon>
        <taxon>Aspergillus subgen. Circumdati</taxon>
    </lineage>
</organism>
<feature type="signal peptide" evidence="2">
    <location>
        <begin position="1"/>
        <end position="19"/>
    </location>
</feature>
<feature type="propeptide" id="PRO_0000393660" evidence="2">
    <location>
        <begin position="20"/>
        <end position="40"/>
    </location>
</feature>
<feature type="chain" id="PRO_5000220025" description="Probable endopolygalacturonase C">
    <location>
        <begin position="41"/>
        <end position="384"/>
    </location>
</feature>
<feature type="repeat" description="PbH1 1">
    <location>
        <begin position="176"/>
        <end position="207"/>
    </location>
</feature>
<feature type="repeat" description="PbH1 2">
    <location>
        <begin position="208"/>
        <end position="229"/>
    </location>
</feature>
<feature type="repeat" description="PbH1 3">
    <location>
        <begin position="254"/>
        <end position="280"/>
    </location>
</feature>
<feature type="repeat" description="PbH1 4">
    <location>
        <begin position="288"/>
        <end position="310"/>
    </location>
</feature>
<feature type="active site" description="Proton donor" evidence="1">
    <location>
        <position position="222"/>
    </location>
</feature>
<feature type="active site" evidence="1">
    <location>
        <position position="244"/>
    </location>
</feature>
<feature type="glycosylation site" description="N-linked (GlcNAc...) asparagine" evidence="2">
    <location>
        <position position="261"/>
    </location>
</feature>
<feature type="disulfide bond" evidence="1">
    <location>
        <begin position="45"/>
        <end position="63"/>
    </location>
</feature>
<feature type="disulfide bond" evidence="1">
    <location>
        <begin position="224"/>
        <end position="240"/>
    </location>
</feature>
<feature type="disulfide bond" evidence="1">
    <location>
        <begin position="349"/>
        <end position="354"/>
    </location>
</feature>
<feature type="disulfide bond" evidence="1">
    <location>
        <begin position="373"/>
        <end position="382"/>
    </location>
</feature>
<protein>
    <recommendedName>
        <fullName>Probable endopolygalacturonase C</fullName>
        <shortName>PGC</shortName>
        <ecNumber>3.2.1.15</ecNumber>
    </recommendedName>
    <alternativeName>
        <fullName>Pectinase 3</fullName>
    </alternativeName>
    <alternativeName>
        <fullName>Pectinase C</fullName>
    </alternativeName>
    <alternativeName>
        <fullName>Polygalacturonase C</fullName>
    </alternativeName>
    <alternativeName>
        <fullName>Polygalacturonase III</fullName>
        <shortName>PG-III</shortName>
    </alternativeName>
</protein>
<proteinExistence type="inferred from homology"/>
<reference key="1">
    <citation type="journal article" date="2007" name="Nat. Biotechnol.">
        <title>Genome sequencing and analysis of the versatile cell factory Aspergillus niger CBS 513.88.</title>
        <authorList>
            <person name="Pel H.J."/>
            <person name="de Winde J.H."/>
            <person name="Archer D.B."/>
            <person name="Dyer P.S."/>
            <person name="Hofmann G."/>
            <person name="Schaap P.J."/>
            <person name="Turner G."/>
            <person name="de Vries R.P."/>
            <person name="Albang R."/>
            <person name="Albermann K."/>
            <person name="Andersen M.R."/>
            <person name="Bendtsen J.D."/>
            <person name="Benen J.A.E."/>
            <person name="van den Berg M."/>
            <person name="Breestraat S."/>
            <person name="Caddick M.X."/>
            <person name="Contreras R."/>
            <person name="Cornell M."/>
            <person name="Coutinho P.M."/>
            <person name="Danchin E.G.J."/>
            <person name="Debets A.J.M."/>
            <person name="Dekker P."/>
            <person name="van Dijck P.W.M."/>
            <person name="van Dijk A."/>
            <person name="Dijkhuizen L."/>
            <person name="Driessen A.J.M."/>
            <person name="d'Enfert C."/>
            <person name="Geysens S."/>
            <person name="Goosen C."/>
            <person name="Groot G.S.P."/>
            <person name="de Groot P.W.J."/>
            <person name="Guillemette T."/>
            <person name="Henrissat B."/>
            <person name="Herweijer M."/>
            <person name="van den Hombergh J.P.T.W."/>
            <person name="van den Hondel C.A.M.J.J."/>
            <person name="van der Heijden R.T.J.M."/>
            <person name="van der Kaaij R.M."/>
            <person name="Klis F.M."/>
            <person name="Kools H.J."/>
            <person name="Kubicek C.P."/>
            <person name="van Kuyk P.A."/>
            <person name="Lauber J."/>
            <person name="Lu X."/>
            <person name="van der Maarel M.J.E.C."/>
            <person name="Meulenberg R."/>
            <person name="Menke H."/>
            <person name="Mortimer M.A."/>
            <person name="Nielsen J."/>
            <person name="Oliver S.G."/>
            <person name="Olsthoorn M."/>
            <person name="Pal K."/>
            <person name="van Peij N.N.M.E."/>
            <person name="Ram A.F.J."/>
            <person name="Rinas U."/>
            <person name="Roubos J.A."/>
            <person name="Sagt C.M.J."/>
            <person name="Schmoll M."/>
            <person name="Sun J."/>
            <person name="Ussery D."/>
            <person name="Varga J."/>
            <person name="Vervecken W."/>
            <person name="van de Vondervoort P.J.J."/>
            <person name="Wedler H."/>
            <person name="Woesten H.A.B."/>
            <person name="Zeng A.-P."/>
            <person name="van Ooyen A.J.J."/>
            <person name="Visser J."/>
            <person name="Stam H."/>
        </authorList>
    </citation>
    <scope>NUCLEOTIDE SEQUENCE [LARGE SCALE GENOMIC DNA]</scope>
    <source>
        <strain>ATCC MYA-4892 / CBS 513.88 / FGSC A1513</strain>
    </source>
</reference>
<evidence type="ECO:0000250" key="1"/>
<evidence type="ECO:0000255" key="2"/>
<evidence type="ECO:0000305" key="3"/>
<gene>
    <name type="primary">pgaC</name>
    <name type="ORF">An05g02440</name>
</gene>
<accession>A2QL39</accession>
<dbReference type="EC" id="3.2.1.15"/>
<dbReference type="EMBL" id="AM270106">
    <property type="protein sequence ID" value="CAK44905.1"/>
    <property type="molecule type" value="Genomic_DNA"/>
</dbReference>
<dbReference type="RefSeq" id="XP_001390812.1">
    <property type="nucleotide sequence ID" value="XM_001390775.1"/>
</dbReference>
<dbReference type="SMR" id="A2QL39"/>
<dbReference type="CAZy" id="GH28">
    <property type="family name" value="Glycoside Hydrolase Family 28"/>
</dbReference>
<dbReference type="GlyCosmos" id="A2QL39">
    <property type="glycosylation" value="1 site, No reported glycans"/>
</dbReference>
<dbReference type="EnsemblFungi" id="CAK44905">
    <property type="protein sequence ID" value="CAK44905"/>
    <property type="gene ID" value="An05g02440"/>
</dbReference>
<dbReference type="GeneID" id="4980981"/>
<dbReference type="KEGG" id="ang:An05g02440"/>
<dbReference type="VEuPathDB" id="FungiDB:An05g02440"/>
<dbReference type="HOGENOM" id="CLU_040116_0_0_1"/>
<dbReference type="Proteomes" id="UP000006706">
    <property type="component" value="Chromosome 7L"/>
</dbReference>
<dbReference type="GO" id="GO:0005576">
    <property type="term" value="C:extracellular region"/>
    <property type="evidence" value="ECO:0000250"/>
    <property type="project" value="UniProtKB"/>
</dbReference>
<dbReference type="GO" id="GO:0004650">
    <property type="term" value="F:polygalacturonase activity"/>
    <property type="evidence" value="ECO:0000250"/>
    <property type="project" value="UniProtKB"/>
</dbReference>
<dbReference type="GO" id="GO:0071555">
    <property type="term" value="P:cell wall organization"/>
    <property type="evidence" value="ECO:0007669"/>
    <property type="project" value="UniProtKB-KW"/>
</dbReference>
<dbReference type="GO" id="GO:0045490">
    <property type="term" value="P:pectin catabolic process"/>
    <property type="evidence" value="ECO:0000250"/>
    <property type="project" value="UniProtKB"/>
</dbReference>
<dbReference type="FunFam" id="2.160.20.10:FF:000002">
    <property type="entry name" value="Endopolygalacturonase D"/>
    <property type="match status" value="1"/>
</dbReference>
<dbReference type="Gene3D" id="2.160.20.10">
    <property type="entry name" value="Single-stranded right-handed beta-helix, Pectin lyase-like"/>
    <property type="match status" value="1"/>
</dbReference>
<dbReference type="InterPro" id="IPR000743">
    <property type="entry name" value="Glyco_hydro_28"/>
</dbReference>
<dbReference type="InterPro" id="IPR050434">
    <property type="entry name" value="Glycosyl_hydrlase_28"/>
</dbReference>
<dbReference type="InterPro" id="IPR006626">
    <property type="entry name" value="PbH1"/>
</dbReference>
<dbReference type="InterPro" id="IPR012334">
    <property type="entry name" value="Pectin_lyas_fold"/>
</dbReference>
<dbReference type="InterPro" id="IPR011050">
    <property type="entry name" value="Pectin_lyase_fold/virulence"/>
</dbReference>
<dbReference type="PANTHER" id="PTHR31884">
    <property type="entry name" value="POLYGALACTURONASE"/>
    <property type="match status" value="1"/>
</dbReference>
<dbReference type="PANTHER" id="PTHR31884:SF1">
    <property type="entry name" value="POLYGALACTURONASE"/>
    <property type="match status" value="1"/>
</dbReference>
<dbReference type="Pfam" id="PF00295">
    <property type="entry name" value="Glyco_hydro_28"/>
    <property type="match status" value="1"/>
</dbReference>
<dbReference type="SMART" id="SM00710">
    <property type="entry name" value="PbH1"/>
    <property type="match status" value="4"/>
</dbReference>
<dbReference type="SUPFAM" id="SSF51126">
    <property type="entry name" value="Pectin lyase-like"/>
    <property type="match status" value="1"/>
</dbReference>
<name>PGLRC_ASPNC</name>
<keyword id="KW-0961">Cell wall biogenesis/degradation</keyword>
<keyword id="KW-1015">Disulfide bond</keyword>
<keyword id="KW-0325">Glycoprotein</keyword>
<keyword id="KW-0326">Glycosidase</keyword>
<keyword id="KW-0378">Hydrolase</keyword>
<keyword id="KW-1185">Reference proteome</keyword>
<keyword id="KW-0677">Repeat</keyword>
<keyword id="KW-0964">Secreted</keyword>
<keyword id="KW-0732">Signal</keyword>
<keyword id="KW-0865">Zymogen</keyword>
<sequence length="384" mass="40573">MVRQLILISSLLAAVAVRAAPADPAHPMVTEAPDVNLVEKRATTCTFSGSEGASKASKSKTSCSTIYLSDVAVPSGTTLDLSDLNDGTHVIFQGETTFGYEEWEGPLVRVSGTDITVEGESDAVLNGDGSRWWDGEGGNGGKTKPKFFYAHDLTSSTIKSIYIENSPVQVFSIDGSTDLTMTDITVDNTDGDTDDLAANTDGFDIGESTYITITGAEIYNQDDCVAINSGENIYFSASVCSGGHGLSIGSVGGRDDNTVKNVTFYDVNVLKSQQAIRIKTIYGDTGSVSEVTYHEIAFSDATDYGIVIEQNYDDTSKTPTTGVPITDFVLENIVGTCEDDDCTEVYIACGDGSCSDWTWTGVSVTGGSVSDDCLNVPSGISCDL</sequence>